<feature type="chain" id="PRO_0000330186" description="NADH-cytochrome b5 reductase 2">
    <location>
        <begin position="1"/>
        <end position="343"/>
    </location>
</feature>
<feature type="transmembrane region" description="Helical" evidence="2">
    <location>
        <begin position="41"/>
        <end position="61"/>
    </location>
</feature>
<feature type="domain" description="FAD-binding FR-type" evidence="3">
    <location>
        <begin position="92"/>
        <end position="197"/>
    </location>
</feature>
<feature type="binding site" evidence="1">
    <location>
        <begin position="200"/>
        <end position="235"/>
    </location>
    <ligand>
        <name>FAD</name>
        <dbReference type="ChEBI" id="CHEBI:57692"/>
    </ligand>
</feature>
<comment type="function">
    <text evidence="1">May mediate the reduction of outer membrane cytochrome b5.</text>
</comment>
<comment type="catalytic activity">
    <reaction>
        <text>2 Fe(III)-[cytochrome b5] + NADH = 2 Fe(II)-[cytochrome b5] + NAD(+) + H(+)</text>
        <dbReference type="Rhea" id="RHEA:46680"/>
        <dbReference type="Rhea" id="RHEA-COMP:10438"/>
        <dbReference type="Rhea" id="RHEA-COMP:10439"/>
        <dbReference type="ChEBI" id="CHEBI:15378"/>
        <dbReference type="ChEBI" id="CHEBI:29033"/>
        <dbReference type="ChEBI" id="CHEBI:29034"/>
        <dbReference type="ChEBI" id="CHEBI:57540"/>
        <dbReference type="ChEBI" id="CHEBI:57945"/>
        <dbReference type="EC" id="1.6.2.2"/>
    </reaction>
</comment>
<comment type="cofactor">
    <cofactor evidence="1">
        <name>FAD</name>
        <dbReference type="ChEBI" id="CHEBI:57692"/>
    </cofactor>
</comment>
<comment type="subcellular location">
    <subcellularLocation>
        <location evidence="1">Mitochondrion outer membrane</location>
        <topology evidence="1">Single-pass membrane protein</topology>
    </subcellularLocation>
</comment>
<comment type="similarity">
    <text evidence="4">Belongs to the flavoprotein pyridine nucleotide cytochrome reductase family.</text>
</comment>
<dbReference type="EC" id="1.6.2.2"/>
<dbReference type="EMBL" id="CM002236">
    <property type="protein sequence ID" value="EAA35735.1"/>
    <property type="molecule type" value="Genomic_DNA"/>
</dbReference>
<dbReference type="RefSeq" id="XP_964971.1">
    <property type="nucleotide sequence ID" value="XM_959878.2"/>
</dbReference>
<dbReference type="SMR" id="Q7SFY2"/>
<dbReference type="FunCoup" id="Q7SFY2">
    <property type="interactions" value="290"/>
</dbReference>
<dbReference type="STRING" id="367110.Q7SFY2"/>
<dbReference type="PaxDb" id="5141-EFNCRP00000002936"/>
<dbReference type="EnsemblFungi" id="EAA35735">
    <property type="protein sequence ID" value="EAA35735"/>
    <property type="gene ID" value="NCU03112"/>
</dbReference>
<dbReference type="GeneID" id="3881129"/>
<dbReference type="KEGG" id="ncr:NCU03112"/>
<dbReference type="VEuPathDB" id="FungiDB:NCU03112"/>
<dbReference type="HOGENOM" id="CLU_003827_9_1_1"/>
<dbReference type="InParanoid" id="Q7SFY2"/>
<dbReference type="OMA" id="KGPEMQK"/>
<dbReference type="OrthoDB" id="432685at2759"/>
<dbReference type="Proteomes" id="UP000001805">
    <property type="component" value="Chromosome 1, Linkage Group I"/>
</dbReference>
<dbReference type="GO" id="GO:0005741">
    <property type="term" value="C:mitochondrial outer membrane"/>
    <property type="evidence" value="ECO:0007669"/>
    <property type="project" value="UniProtKB-SubCell"/>
</dbReference>
<dbReference type="GO" id="GO:0004128">
    <property type="term" value="F:cytochrome-b5 reductase activity, acting on NAD(P)H"/>
    <property type="evidence" value="ECO:0000318"/>
    <property type="project" value="GO_Central"/>
</dbReference>
<dbReference type="GO" id="GO:0006696">
    <property type="term" value="P:ergosterol biosynthetic process"/>
    <property type="evidence" value="ECO:0000318"/>
    <property type="project" value="GO_Central"/>
</dbReference>
<dbReference type="CDD" id="cd06183">
    <property type="entry name" value="cyt_b5_reduct_like"/>
    <property type="match status" value="1"/>
</dbReference>
<dbReference type="FunFam" id="2.40.30.10:FF:000032">
    <property type="entry name" value="NADH-cytochrome b5 reductase"/>
    <property type="match status" value="1"/>
</dbReference>
<dbReference type="FunFam" id="3.40.50.80:FF:000009">
    <property type="entry name" value="NADH-cytochrome b5 reductase"/>
    <property type="match status" value="1"/>
</dbReference>
<dbReference type="Gene3D" id="3.40.50.80">
    <property type="entry name" value="Nucleotide-binding domain of ferredoxin-NADP reductase (FNR) module"/>
    <property type="match status" value="1"/>
</dbReference>
<dbReference type="Gene3D" id="2.40.30.10">
    <property type="entry name" value="Translation factors"/>
    <property type="match status" value="1"/>
</dbReference>
<dbReference type="InterPro" id="IPR001834">
    <property type="entry name" value="CBR-like"/>
</dbReference>
<dbReference type="InterPro" id="IPR008333">
    <property type="entry name" value="Cbr1-like_FAD-bd_dom"/>
</dbReference>
<dbReference type="InterPro" id="IPR017927">
    <property type="entry name" value="FAD-bd_FR_type"/>
</dbReference>
<dbReference type="InterPro" id="IPR001709">
    <property type="entry name" value="Flavoprot_Pyr_Nucl_cyt_Rdtase"/>
</dbReference>
<dbReference type="InterPro" id="IPR039261">
    <property type="entry name" value="FNR_nucleotide-bd"/>
</dbReference>
<dbReference type="InterPro" id="IPR001433">
    <property type="entry name" value="OxRdtase_FAD/NAD-bd"/>
</dbReference>
<dbReference type="InterPro" id="IPR017938">
    <property type="entry name" value="Riboflavin_synthase-like_b-brl"/>
</dbReference>
<dbReference type="PANTHER" id="PTHR19370">
    <property type="entry name" value="NADH-CYTOCHROME B5 REDUCTASE"/>
    <property type="match status" value="1"/>
</dbReference>
<dbReference type="PANTHER" id="PTHR19370:SF171">
    <property type="entry name" value="NADH-CYTOCHROME B5 REDUCTASE 2"/>
    <property type="match status" value="1"/>
</dbReference>
<dbReference type="Pfam" id="PF00970">
    <property type="entry name" value="FAD_binding_6"/>
    <property type="match status" value="1"/>
</dbReference>
<dbReference type="Pfam" id="PF00175">
    <property type="entry name" value="NAD_binding_1"/>
    <property type="match status" value="1"/>
</dbReference>
<dbReference type="PRINTS" id="PR00406">
    <property type="entry name" value="CYTB5RDTASE"/>
</dbReference>
<dbReference type="PRINTS" id="PR00371">
    <property type="entry name" value="FPNCR"/>
</dbReference>
<dbReference type="SUPFAM" id="SSF52343">
    <property type="entry name" value="Ferredoxin reductase-like, C-terminal NADP-linked domain"/>
    <property type="match status" value="1"/>
</dbReference>
<dbReference type="SUPFAM" id="SSF63380">
    <property type="entry name" value="Riboflavin synthase domain-like"/>
    <property type="match status" value="1"/>
</dbReference>
<dbReference type="PROSITE" id="PS51384">
    <property type="entry name" value="FAD_FR"/>
    <property type="match status" value="1"/>
</dbReference>
<keyword id="KW-0274">FAD</keyword>
<keyword id="KW-0285">Flavoprotein</keyword>
<keyword id="KW-0472">Membrane</keyword>
<keyword id="KW-0496">Mitochondrion</keyword>
<keyword id="KW-1000">Mitochondrion outer membrane</keyword>
<keyword id="KW-0520">NAD</keyword>
<keyword id="KW-0560">Oxidoreductase</keyword>
<keyword id="KW-1185">Reference proteome</keyword>
<keyword id="KW-0812">Transmembrane</keyword>
<keyword id="KW-1133">Transmembrane helix</keyword>
<evidence type="ECO:0000250" key="1"/>
<evidence type="ECO:0000255" key="2"/>
<evidence type="ECO:0000255" key="3">
    <source>
        <dbReference type="PROSITE-ProRule" id="PRU00716"/>
    </source>
</evidence>
<evidence type="ECO:0000305" key="4"/>
<proteinExistence type="inferred from homology"/>
<sequence length="343" mass="37641">MSLFVASTRSAFRAAAPIKRSFQTRRSYATEPSKGGSSSTILLGAAAVGLAGAGAYFFSGAGAAKKAEASVKQVTEKITPGEIKKAFVGGDQGWLSLKLEEVELVNHNTKRLRFRLPEDDMVSGLHVASAILTKFKPIDAEKAVLRPYTPISDESAQGYIDLLVKKYEGGPMSTYLHDMAPGQRLDIKGPLPKYPWEANKHKHIALVAGGTGITPMYQLIRAIFNNPDDKTKVTLVFGNVSEEDVLLKHELATIENHYPQRFRAFYVLDNPPKEWAGNKGYINKDLLKTVLPEPKNEDIKIFVCGPPGMMNSISGNKKSPRDQGELTGILKELGYSPDQVYKF</sequence>
<organism>
    <name type="scientific">Neurospora crassa (strain ATCC 24698 / 74-OR23-1A / CBS 708.71 / DSM 1257 / FGSC 987)</name>
    <dbReference type="NCBI Taxonomy" id="367110"/>
    <lineage>
        <taxon>Eukaryota</taxon>
        <taxon>Fungi</taxon>
        <taxon>Dikarya</taxon>
        <taxon>Ascomycota</taxon>
        <taxon>Pezizomycotina</taxon>
        <taxon>Sordariomycetes</taxon>
        <taxon>Sordariomycetidae</taxon>
        <taxon>Sordariales</taxon>
        <taxon>Sordariaceae</taxon>
        <taxon>Neurospora</taxon>
    </lineage>
</organism>
<accession>Q7SFY2</accession>
<gene>
    <name type="primary">mcr-1</name>
    <name type="ORF">NCU03112</name>
</gene>
<name>MCR1_NEUCR</name>
<reference key="1">
    <citation type="journal article" date="2003" name="Nature">
        <title>The genome sequence of the filamentous fungus Neurospora crassa.</title>
        <authorList>
            <person name="Galagan J.E."/>
            <person name="Calvo S.E."/>
            <person name="Borkovich K.A."/>
            <person name="Selker E.U."/>
            <person name="Read N.D."/>
            <person name="Jaffe D.B."/>
            <person name="FitzHugh W."/>
            <person name="Ma L.-J."/>
            <person name="Smirnov S."/>
            <person name="Purcell S."/>
            <person name="Rehman B."/>
            <person name="Elkins T."/>
            <person name="Engels R."/>
            <person name="Wang S."/>
            <person name="Nielsen C.B."/>
            <person name="Butler J."/>
            <person name="Endrizzi M."/>
            <person name="Qui D."/>
            <person name="Ianakiev P."/>
            <person name="Bell-Pedersen D."/>
            <person name="Nelson M.A."/>
            <person name="Werner-Washburne M."/>
            <person name="Selitrennikoff C.P."/>
            <person name="Kinsey J.A."/>
            <person name="Braun E.L."/>
            <person name="Zelter A."/>
            <person name="Schulte U."/>
            <person name="Kothe G.O."/>
            <person name="Jedd G."/>
            <person name="Mewes H.-W."/>
            <person name="Staben C."/>
            <person name="Marcotte E."/>
            <person name="Greenberg D."/>
            <person name="Roy A."/>
            <person name="Foley K."/>
            <person name="Naylor J."/>
            <person name="Stange-Thomann N."/>
            <person name="Barrett R."/>
            <person name="Gnerre S."/>
            <person name="Kamal M."/>
            <person name="Kamvysselis M."/>
            <person name="Mauceli E.W."/>
            <person name="Bielke C."/>
            <person name="Rudd S."/>
            <person name="Frishman D."/>
            <person name="Krystofova S."/>
            <person name="Rasmussen C."/>
            <person name="Metzenberg R.L."/>
            <person name="Perkins D.D."/>
            <person name="Kroken S."/>
            <person name="Cogoni C."/>
            <person name="Macino G."/>
            <person name="Catcheside D.E.A."/>
            <person name="Li W."/>
            <person name="Pratt R.J."/>
            <person name="Osmani S.A."/>
            <person name="DeSouza C.P.C."/>
            <person name="Glass N.L."/>
            <person name="Orbach M.J."/>
            <person name="Berglund J.A."/>
            <person name="Voelker R."/>
            <person name="Yarden O."/>
            <person name="Plamann M."/>
            <person name="Seiler S."/>
            <person name="Dunlap J.C."/>
            <person name="Radford A."/>
            <person name="Aramayo R."/>
            <person name="Natvig D.O."/>
            <person name="Alex L.A."/>
            <person name="Mannhaupt G."/>
            <person name="Ebbole D.J."/>
            <person name="Freitag M."/>
            <person name="Paulsen I."/>
            <person name="Sachs M.S."/>
            <person name="Lander E.S."/>
            <person name="Nusbaum C."/>
            <person name="Birren B.W."/>
        </authorList>
    </citation>
    <scope>NUCLEOTIDE SEQUENCE [LARGE SCALE GENOMIC DNA]</scope>
    <source>
        <strain>ATCC 24698 / 74-OR23-1A / CBS 708.71 / DSM 1257 / FGSC 987</strain>
    </source>
</reference>
<protein>
    <recommendedName>
        <fullName>NADH-cytochrome b5 reductase 2</fullName>
        <ecNumber>1.6.2.2</ecNumber>
    </recommendedName>
    <alternativeName>
        <fullName>Mitochondrial cytochrome b reductase</fullName>
    </alternativeName>
</protein>